<reference key="1">
    <citation type="journal article" date="2003" name="PLoS Biol.">
        <title>The genome sequence of Caenorhabditis briggsae: a platform for comparative genomics.</title>
        <authorList>
            <person name="Stein L.D."/>
            <person name="Bao Z."/>
            <person name="Blasiar D."/>
            <person name="Blumenthal T."/>
            <person name="Brent M.R."/>
            <person name="Chen N."/>
            <person name="Chinwalla A."/>
            <person name="Clarke L."/>
            <person name="Clee C."/>
            <person name="Coghlan A."/>
            <person name="Coulson A."/>
            <person name="D'Eustachio P."/>
            <person name="Fitch D.H.A."/>
            <person name="Fulton L.A."/>
            <person name="Fulton R.E."/>
            <person name="Griffiths-Jones S."/>
            <person name="Harris T.W."/>
            <person name="Hillier L.W."/>
            <person name="Kamath R."/>
            <person name="Kuwabara P.E."/>
            <person name="Mardis E.R."/>
            <person name="Marra M.A."/>
            <person name="Miner T.L."/>
            <person name="Minx P."/>
            <person name="Mullikin J.C."/>
            <person name="Plumb R.W."/>
            <person name="Rogers J."/>
            <person name="Schein J.E."/>
            <person name="Sohrmann M."/>
            <person name="Spieth J."/>
            <person name="Stajich J.E."/>
            <person name="Wei C."/>
            <person name="Willey D."/>
            <person name="Wilson R.K."/>
            <person name="Durbin R.M."/>
            <person name="Waterston R.H."/>
        </authorList>
    </citation>
    <scope>NUCLEOTIDE SEQUENCE [LARGE SCALE GENOMIC DNA]</scope>
    <source>
        <strain>AF16</strain>
    </source>
</reference>
<feature type="chain" id="PRO_0000306260" description="Ectopic P granules protein 5">
    <location>
        <begin position="1"/>
        <end position="1601"/>
    </location>
</feature>
<feature type="region of interest" description="Disordered" evidence="2">
    <location>
        <begin position="1"/>
        <end position="109"/>
    </location>
</feature>
<feature type="compositionally biased region" description="Basic and acidic residues" evidence="2">
    <location>
        <begin position="15"/>
        <end position="26"/>
    </location>
</feature>
<keyword id="KW-0072">Autophagy</keyword>
<keyword id="KW-0963">Cytoplasm</keyword>
<keyword id="KW-1185">Reference proteome</keyword>
<accession>Q61WP7</accession>
<accession>A8WX79</accession>
<comment type="function">
    <text evidence="1">Involved in autophagy. Has a role in the degradation of protein aggregates within autophagosomes. Essential for starvation-induced autotrophy and omegasome development (By similarity).</text>
</comment>
<comment type="subcellular location">
    <subcellularLocation>
        <location evidence="1">Cytoplasm</location>
    </subcellularLocation>
</comment>
<comment type="similarity">
    <text evidence="3">Belongs to the EPG5 family.</text>
</comment>
<evidence type="ECO:0000250" key="1"/>
<evidence type="ECO:0000256" key="2">
    <source>
        <dbReference type="SAM" id="MobiDB-lite"/>
    </source>
</evidence>
<evidence type="ECO:0000305" key="3"/>
<organism>
    <name type="scientific">Caenorhabditis briggsae</name>
    <dbReference type="NCBI Taxonomy" id="6238"/>
    <lineage>
        <taxon>Eukaryota</taxon>
        <taxon>Metazoa</taxon>
        <taxon>Ecdysozoa</taxon>
        <taxon>Nematoda</taxon>
        <taxon>Chromadorea</taxon>
        <taxon>Rhabditida</taxon>
        <taxon>Rhabditina</taxon>
        <taxon>Rhabditomorpha</taxon>
        <taxon>Rhabditoidea</taxon>
        <taxon>Rhabditidae</taxon>
        <taxon>Peloderinae</taxon>
        <taxon>Caenorhabditis</taxon>
    </lineage>
</organism>
<dbReference type="EMBL" id="HE600920">
    <property type="protein sequence ID" value="CAP25045.3"/>
    <property type="molecule type" value="Genomic_DNA"/>
</dbReference>
<dbReference type="SMR" id="Q61WP7"/>
<dbReference type="FunCoup" id="Q61WP7">
    <property type="interactions" value="2753"/>
</dbReference>
<dbReference type="STRING" id="6238.Q61WP7"/>
<dbReference type="KEGG" id="cbr:CBG_04313"/>
<dbReference type="CTD" id="8571889"/>
<dbReference type="WormBase" id="CBG04313">
    <property type="protein sequence ID" value="CBP42544"/>
    <property type="gene ID" value="WBGene00027014"/>
    <property type="gene designation" value="Cbr-epg-5"/>
</dbReference>
<dbReference type="eggNOG" id="KOG3622">
    <property type="taxonomic scope" value="Eukaryota"/>
</dbReference>
<dbReference type="HOGENOM" id="CLU_003383_0_0_1"/>
<dbReference type="InParanoid" id="Q61WP7"/>
<dbReference type="OMA" id="LYCYEAE"/>
<dbReference type="Proteomes" id="UP000008549">
    <property type="component" value="Unassembled WGS sequence"/>
</dbReference>
<dbReference type="GO" id="GO:0005737">
    <property type="term" value="C:cytoplasm"/>
    <property type="evidence" value="ECO:0000318"/>
    <property type="project" value="GO_Central"/>
</dbReference>
<dbReference type="GO" id="GO:0097352">
    <property type="term" value="P:autophagosome maturation"/>
    <property type="evidence" value="ECO:0000318"/>
    <property type="project" value="GO_Central"/>
</dbReference>
<dbReference type="InterPro" id="IPR051436">
    <property type="entry name" value="Autophagy-related_EPG5"/>
</dbReference>
<dbReference type="PANTHER" id="PTHR31139">
    <property type="entry name" value="ECTOPIC P GRANULES PROTEIN 5 HOMOLOG"/>
    <property type="match status" value="1"/>
</dbReference>
<dbReference type="PANTHER" id="PTHR31139:SF4">
    <property type="entry name" value="ECTOPIC P GRANULES PROTEIN 5 HOMOLOG"/>
    <property type="match status" value="1"/>
</dbReference>
<proteinExistence type="inferred from homology"/>
<sequence>MAELVRPKKPKHRERPQSDDAPRIPDRPVMVNGMRLPVAPSHSIQHQRDRSASPEPEEQVLSDTGESINPEKENGSIQDVRSSPVRPAPPPPRAISQEREAPPIPARNLVFPRSTSMVAESTREPTPVVLPKRSVAVAPYPTVPELAELPSYTAALKHPQVYPAVDGGQLHHSRSAAAIPEKTRFSAPVAQERVREGEAPPMYPSINTYERNEHGLMTEENLVTFYHNPLYEHAEIFVDQFIKAEVVPNQSGSLFPLLARLKSVCDLMTVSEVKGKENTEELQKCLRECWVQQTMSVEAKGKCGDNNDGTGRASYFSYELQQSVLDQMKRLLSTNRTNLLDHTLCEETSFRSLALQIQWQIIIINNNFMAENGLTTNCPPSLVATGPMTPGRTAIRTALSDIFYHLRYPRLSKRFIDTLFGWIKELTCILNMRQSCDDGIFLLCHLLRLPSPIDHWAPPFVQTFIQSQSPPRLKLDYCVALLTHLLNPIKARESFLRHVAQSEKEESTWEILADDDDGEANEFSFVTINESDLTAFLDQIPISELYSIAYLAFTSYSDKGSQFTAMIAFQLLLMKILDNGLTSYSQPGYKMFCKQIGISLKHSVRELCSNWRLIRDQIRPGEEQNLQKEVDRIVLLALNYLIHRDSVGLFQFVVALPYGVVSEECRSRCEYALRSNKKMSIHEIYETPICEVRARISSQSIAKRVSSLGAQDSEFLINSLASIGSYSNGDVGQLLKELIDVCFCEPATRDDFYKCGGEAIGQILTKRPETLHQLLAIVDRNLQHMDSYAINVLSSSRLFECRLTEPMISIIGKWLINNPPEHGANRLARRVLSGLHWGLGPDGQNLWIDVDVHAIAADTVVKAHSVHCSRSNSMISKSISKISKLASKVGDAESLFQQFCWDLLVKLKLPTIPVDLVQNDLTAHYVRIVQNYEDDVVVYLEKAVPLLSDLVSSGSSVASVVLLSRLIAQHYQKVNLMAADKNFMATFERLLHIDQLPYAVQWLSGPSSTPTPIVRLICSAISYYSAKLPPRDYLRAWITLLCQARTGWNEDAVTYQIVGTIARIAFINDTQKLYEITSIVFQAYQQQMAAEKNQSKGILALFSSDSSASPLIPDSMLAVSPFASYIMLRVEQKSFNPFYGHFYETLGKKDKYNLDHAAKKAASKCSMALPVERLAVFRWAKLVIVCKDSALLPIILQQLAGQAYRLRKANNLNLCYARRLIDEPQMQGVMAECRKAIEETTVATKGLSKAVVGWLFTKHEVTRTGFDFSVFDLDYLLQLILAGDKNMWMDFVNMPHFTSEEFAERKLYSVTCQLSPKNRESPSPPELGSPRARGTAKPFPVLPVHSGLPKAPCLDPSTIFQQHVVLQMAAPFMSTVKNLAKQYTECGDRMDIYDDAYCKLIRILYQSTQQTVPVEIRCSYCSKPKPCTMTVKPNVLSPEIDVKMSQNRQKRIEFWNELNASMIDQAAVATASMEHLSRLVSMMAAALDPRNRNSVQPTGHSLFYLITSSVGENELLFSVASESYSHSLRALGEEFVKFRPEEQMDVMQLALNGFVLSEPLVEVFTAEVLNSDDLCTAYRKLSDAVRMPERSKMALQLLGEQ</sequence>
<gene>
    <name type="primary">epg-5</name>
    <name type="ORF">CBG04313</name>
</gene>
<name>EPG5_CAEBR</name>
<protein>
    <recommendedName>
        <fullName>Ectopic P granules protein 5</fullName>
    </recommendedName>
</protein>